<proteinExistence type="inferred from homology"/>
<accession>B0VRV0</accession>
<organism>
    <name type="scientific">Acinetobacter baumannii (strain SDF)</name>
    <dbReference type="NCBI Taxonomy" id="509170"/>
    <lineage>
        <taxon>Bacteria</taxon>
        <taxon>Pseudomonadati</taxon>
        <taxon>Pseudomonadota</taxon>
        <taxon>Gammaproteobacteria</taxon>
        <taxon>Moraxellales</taxon>
        <taxon>Moraxellaceae</taxon>
        <taxon>Acinetobacter</taxon>
        <taxon>Acinetobacter calcoaceticus/baumannii complex</taxon>
    </lineage>
</organism>
<feature type="chain" id="PRO_1000094871" description="Large-conductance mechanosensitive channel">
    <location>
        <begin position="1"/>
        <end position="143"/>
    </location>
</feature>
<feature type="transmembrane region" description="Helical" evidence="1">
    <location>
        <begin position="10"/>
        <end position="30"/>
    </location>
</feature>
<feature type="transmembrane region" description="Helical" evidence="1">
    <location>
        <begin position="40"/>
        <end position="60"/>
    </location>
</feature>
<feature type="transmembrane region" description="Helical" evidence="1">
    <location>
        <begin position="86"/>
        <end position="106"/>
    </location>
</feature>
<comment type="function">
    <text evidence="1">Channel that opens in response to stretch forces in the membrane lipid bilayer. May participate in the regulation of osmotic pressure changes within the cell.</text>
</comment>
<comment type="subunit">
    <text evidence="1">Homopentamer.</text>
</comment>
<comment type="subcellular location">
    <subcellularLocation>
        <location evidence="1">Cell inner membrane</location>
        <topology evidence="1">Multi-pass membrane protein</topology>
    </subcellularLocation>
</comment>
<comment type="similarity">
    <text evidence="1">Belongs to the MscL family.</text>
</comment>
<name>MSCL_ACIBS</name>
<keyword id="KW-0997">Cell inner membrane</keyword>
<keyword id="KW-1003">Cell membrane</keyword>
<keyword id="KW-0407">Ion channel</keyword>
<keyword id="KW-0406">Ion transport</keyword>
<keyword id="KW-0472">Membrane</keyword>
<keyword id="KW-0812">Transmembrane</keyword>
<keyword id="KW-1133">Transmembrane helix</keyword>
<keyword id="KW-0813">Transport</keyword>
<reference key="1">
    <citation type="journal article" date="2008" name="PLoS ONE">
        <title>Comparative analysis of Acinetobacters: three genomes for three lifestyles.</title>
        <authorList>
            <person name="Vallenet D."/>
            <person name="Nordmann P."/>
            <person name="Barbe V."/>
            <person name="Poirel L."/>
            <person name="Mangenot S."/>
            <person name="Bataille E."/>
            <person name="Dossat C."/>
            <person name="Gas S."/>
            <person name="Kreimeyer A."/>
            <person name="Lenoble P."/>
            <person name="Oztas S."/>
            <person name="Poulain J."/>
            <person name="Segurens B."/>
            <person name="Robert C."/>
            <person name="Abergel C."/>
            <person name="Claverie J.-M."/>
            <person name="Raoult D."/>
            <person name="Medigue C."/>
            <person name="Weissenbach J."/>
            <person name="Cruveiller S."/>
        </authorList>
    </citation>
    <scope>NUCLEOTIDE SEQUENCE [LARGE SCALE GENOMIC DNA]</scope>
    <source>
        <strain>SDF</strain>
    </source>
</reference>
<sequence>MSIIQEFKEFAIKGNMMDLAIGVIIGGAFGKIVDSLVKDIIMPLITVITGGGVDFSQKFIVLGANPNNLQSLDALQKAGINVLTYGNFLTILINFLILAWVVFLMVKLLNKLRRDKNEPEAPAATPEDIQLLREIRDELKKQA</sequence>
<gene>
    <name evidence="1" type="primary">mscL</name>
    <name type="ordered locus">ABSDF0613</name>
</gene>
<protein>
    <recommendedName>
        <fullName evidence="1">Large-conductance mechanosensitive channel</fullName>
    </recommendedName>
</protein>
<evidence type="ECO:0000255" key="1">
    <source>
        <dbReference type="HAMAP-Rule" id="MF_00115"/>
    </source>
</evidence>
<dbReference type="EMBL" id="CU468230">
    <property type="protein sequence ID" value="CAO99991.1"/>
    <property type="molecule type" value="Genomic_DNA"/>
</dbReference>
<dbReference type="SMR" id="B0VRV0"/>
<dbReference type="KEGG" id="abm:ABSDF0613"/>
<dbReference type="HOGENOM" id="CLU_095787_0_1_6"/>
<dbReference type="Proteomes" id="UP000001741">
    <property type="component" value="Chromosome"/>
</dbReference>
<dbReference type="GO" id="GO:0005886">
    <property type="term" value="C:plasma membrane"/>
    <property type="evidence" value="ECO:0007669"/>
    <property type="project" value="UniProtKB-SubCell"/>
</dbReference>
<dbReference type="GO" id="GO:0008381">
    <property type="term" value="F:mechanosensitive monoatomic ion channel activity"/>
    <property type="evidence" value="ECO:0007669"/>
    <property type="project" value="UniProtKB-UniRule"/>
</dbReference>
<dbReference type="Gene3D" id="1.10.1200.120">
    <property type="entry name" value="Large-conductance mechanosensitive channel, MscL, domain 1"/>
    <property type="match status" value="1"/>
</dbReference>
<dbReference type="HAMAP" id="MF_00115">
    <property type="entry name" value="MscL"/>
    <property type="match status" value="1"/>
</dbReference>
<dbReference type="InterPro" id="IPR019823">
    <property type="entry name" value="Mechanosensitive_channel_CS"/>
</dbReference>
<dbReference type="InterPro" id="IPR001185">
    <property type="entry name" value="MS_channel"/>
</dbReference>
<dbReference type="InterPro" id="IPR037673">
    <property type="entry name" value="MSC/AndL"/>
</dbReference>
<dbReference type="InterPro" id="IPR036019">
    <property type="entry name" value="MscL_channel"/>
</dbReference>
<dbReference type="NCBIfam" id="TIGR00220">
    <property type="entry name" value="mscL"/>
    <property type="match status" value="1"/>
</dbReference>
<dbReference type="NCBIfam" id="NF001843">
    <property type="entry name" value="PRK00567.1-4"/>
    <property type="match status" value="1"/>
</dbReference>
<dbReference type="NCBIfam" id="NF010557">
    <property type="entry name" value="PRK13952.1"/>
    <property type="match status" value="1"/>
</dbReference>
<dbReference type="PANTHER" id="PTHR30266:SF2">
    <property type="entry name" value="LARGE-CONDUCTANCE MECHANOSENSITIVE CHANNEL"/>
    <property type="match status" value="1"/>
</dbReference>
<dbReference type="PANTHER" id="PTHR30266">
    <property type="entry name" value="MECHANOSENSITIVE CHANNEL MSCL"/>
    <property type="match status" value="1"/>
</dbReference>
<dbReference type="Pfam" id="PF01741">
    <property type="entry name" value="MscL"/>
    <property type="match status" value="1"/>
</dbReference>
<dbReference type="PRINTS" id="PR01264">
    <property type="entry name" value="MECHCHANNEL"/>
</dbReference>
<dbReference type="SUPFAM" id="SSF81330">
    <property type="entry name" value="Gated mechanosensitive channel"/>
    <property type="match status" value="1"/>
</dbReference>
<dbReference type="PROSITE" id="PS01327">
    <property type="entry name" value="MSCL"/>
    <property type="match status" value="1"/>
</dbReference>